<comment type="catalytic activity">
    <reaction evidence="1">
        <text>tRNA(Leu) + L-leucine + ATP = L-leucyl-tRNA(Leu) + AMP + diphosphate</text>
        <dbReference type="Rhea" id="RHEA:11688"/>
        <dbReference type="Rhea" id="RHEA-COMP:9613"/>
        <dbReference type="Rhea" id="RHEA-COMP:9622"/>
        <dbReference type="ChEBI" id="CHEBI:30616"/>
        <dbReference type="ChEBI" id="CHEBI:33019"/>
        <dbReference type="ChEBI" id="CHEBI:57427"/>
        <dbReference type="ChEBI" id="CHEBI:78442"/>
        <dbReference type="ChEBI" id="CHEBI:78494"/>
        <dbReference type="ChEBI" id="CHEBI:456215"/>
        <dbReference type="EC" id="6.1.1.4"/>
    </reaction>
</comment>
<comment type="subcellular location">
    <subcellularLocation>
        <location evidence="1">Cytoplasm</location>
    </subcellularLocation>
</comment>
<comment type="similarity">
    <text evidence="1">Belongs to the class-I aminoacyl-tRNA synthetase family.</text>
</comment>
<gene>
    <name evidence="1" type="primary">leuS</name>
    <name type="ordered locus">TPASS_0586</name>
</gene>
<protein>
    <recommendedName>
        <fullName evidence="1">Leucine--tRNA ligase</fullName>
        <ecNumber evidence="1">6.1.1.4</ecNumber>
    </recommendedName>
    <alternativeName>
        <fullName evidence="1">Leucyl-tRNA synthetase</fullName>
        <shortName evidence="1">LeuRS</shortName>
    </alternativeName>
</protein>
<proteinExistence type="inferred from homology"/>
<keyword id="KW-0030">Aminoacyl-tRNA synthetase</keyword>
<keyword id="KW-0067">ATP-binding</keyword>
<keyword id="KW-0963">Cytoplasm</keyword>
<keyword id="KW-0436">Ligase</keyword>
<keyword id="KW-0547">Nucleotide-binding</keyword>
<keyword id="KW-0648">Protein biosynthesis</keyword>
<feature type="chain" id="PRO_1000199232" description="Leucine--tRNA ligase">
    <location>
        <begin position="1"/>
        <end position="878"/>
    </location>
</feature>
<feature type="short sequence motif" description="'HIGH' region">
    <location>
        <begin position="43"/>
        <end position="54"/>
    </location>
</feature>
<feature type="short sequence motif" description="'KMSKS' region">
    <location>
        <begin position="634"/>
        <end position="638"/>
    </location>
</feature>
<feature type="binding site" evidence="1">
    <location>
        <position position="637"/>
    </location>
    <ligand>
        <name>ATP</name>
        <dbReference type="ChEBI" id="CHEBI:30616"/>
    </ligand>
</feature>
<reference key="1">
    <citation type="journal article" date="2008" name="BMC Microbiol.">
        <title>Complete genome sequence of Treponema pallidum ssp. pallidum strain SS14 determined with oligonucleotide arrays.</title>
        <authorList>
            <person name="Matejkova P."/>
            <person name="Strouhal M."/>
            <person name="Smajs D."/>
            <person name="Norris S.J."/>
            <person name="Palzkill T."/>
            <person name="Petrosino J.F."/>
            <person name="Sodergren E."/>
            <person name="Norton J.E."/>
            <person name="Singh J."/>
            <person name="Richmond T.A."/>
            <person name="Molla M.N."/>
            <person name="Albert T.J."/>
            <person name="Weinstock G.M."/>
        </authorList>
    </citation>
    <scope>NUCLEOTIDE SEQUENCE [LARGE SCALE GENOMIC DNA]</scope>
    <source>
        <strain>SS14</strain>
    </source>
</reference>
<evidence type="ECO:0000255" key="1">
    <source>
        <dbReference type="HAMAP-Rule" id="MF_00049"/>
    </source>
</evidence>
<dbReference type="EC" id="6.1.1.4" evidence="1"/>
<dbReference type="EMBL" id="CP000805">
    <property type="protein sequence ID" value="ACD71006.1"/>
    <property type="molecule type" value="Genomic_DNA"/>
</dbReference>
<dbReference type="RefSeq" id="WP_010882032.1">
    <property type="nucleotide sequence ID" value="NC_021508.1"/>
</dbReference>
<dbReference type="SMR" id="B2S3H7"/>
<dbReference type="GeneID" id="93876352"/>
<dbReference type="KEGG" id="tpp:TPASS_0586"/>
<dbReference type="PATRIC" id="fig|455434.6.peg.583"/>
<dbReference type="Proteomes" id="UP000001202">
    <property type="component" value="Chromosome"/>
</dbReference>
<dbReference type="GO" id="GO:0005829">
    <property type="term" value="C:cytosol"/>
    <property type="evidence" value="ECO:0007669"/>
    <property type="project" value="TreeGrafter"/>
</dbReference>
<dbReference type="GO" id="GO:0002161">
    <property type="term" value="F:aminoacyl-tRNA deacylase activity"/>
    <property type="evidence" value="ECO:0007669"/>
    <property type="project" value="InterPro"/>
</dbReference>
<dbReference type="GO" id="GO:0005524">
    <property type="term" value="F:ATP binding"/>
    <property type="evidence" value="ECO:0007669"/>
    <property type="project" value="UniProtKB-UniRule"/>
</dbReference>
<dbReference type="GO" id="GO:0004823">
    <property type="term" value="F:leucine-tRNA ligase activity"/>
    <property type="evidence" value="ECO:0007669"/>
    <property type="project" value="UniProtKB-UniRule"/>
</dbReference>
<dbReference type="GO" id="GO:0006429">
    <property type="term" value="P:leucyl-tRNA aminoacylation"/>
    <property type="evidence" value="ECO:0007669"/>
    <property type="project" value="UniProtKB-UniRule"/>
</dbReference>
<dbReference type="CDD" id="cd07958">
    <property type="entry name" value="Anticodon_Ia_Leu_BEm"/>
    <property type="match status" value="1"/>
</dbReference>
<dbReference type="CDD" id="cd00812">
    <property type="entry name" value="LeuRS_core"/>
    <property type="match status" value="1"/>
</dbReference>
<dbReference type="FunFam" id="3.40.50.620:FF:000056">
    <property type="entry name" value="Leucine--tRNA ligase"/>
    <property type="match status" value="1"/>
</dbReference>
<dbReference type="FunFam" id="3.40.50.620:FF:000077">
    <property type="entry name" value="Leucine--tRNA ligase"/>
    <property type="match status" value="1"/>
</dbReference>
<dbReference type="FunFam" id="1.10.730.10:FF:000011">
    <property type="entry name" value="Leucine--tRNA ligase chloroplastic/mitochondrial"/>
    <property type="match status" value="1"/>
</dbReference>
<dbReference type="Gene3D" id="3.40.50.620">
    <property type="entry name" value="HUPs"/>
    <property type="match status" value="2"/>
</dbReference>
<dbReference type="Gene3D" id="1.10.730.10">
    <property type="entry name" value="Isoleucyl-tRNA Synthetase, Domain 1"/>
    <property type="match status" value="1"/>
</dbReference>
<dbReference type="HAMAP" id="MF_00049_B">
    <property type="entry name" value="Leu_tRNA_synth_B"/>
    <property type="match status" value="1"/>
</dbReference>
<dbReference type="InterPro" id="IPR001412">
    <property type="entry name" value="aa-tRNA-synth_I_CS"/>
</dbReference>
<dbReference type="InterPro" id="IPR002302">
    <property type="entry name" value="Leu-tRNA-ligase"/>
</dbReference>
<dbReference type="InterPro" id="IPR025709">
    <property type="entry name" value="Leu_tRNA-synth_edit"/>
</dbReference>
<dbReference type="InterPro" id="IPR013155">
    <property type="entry name" value="M/V/L/I-tRNA-synth_anticd-bd"/>
</dbReference>
<dbReference type="InterPro" id="IPR015413">
    <property type="entry name" value="Methionyl/Leucyl_tRNA_Synth"/>
</dbReference>
<dbReference type="InterPro" id="IPR014729">
    <property type="entry name" value="Rossmann-like_a/b/a_fold"/>
</dbReference>
<dbReference type="InterPro" id="IPR009080">
    <property type="entry name" value="tRNAsynth_Ia_anticodon-bd"/>
</dbReference>
<dbReference type="InterPro" id="IPR009008">
    <property type="entry name" value="Val/Leu/Ile-tRNA-synth_edit"/>
</dbReference>
<dbReference type="NCBIfam" id="TIGR00396">
    <property type="entry name" value="leuS_bact"/>
    <property type="match status" value="1"/>
</dbReference>
<dbReference type="PANTHER" id="PTHR43740:SF2">
    <property type="entry name" value="LEUCINE--TRNA LIGASE, MITOCHONDRIAL"/>
    <property type="match status" value="1"/>
</dbReference>
<dbReference type="PANTHER" id="PTHR43740">
    <property type="entry name" value="LEUCYL-TRNA SYNTHETASE"/>
    <property type="match status" value="1"/>
</dbReference>
<dbReference type="Pfam" id="PF08264">
    <property type="entry name" value="Anticodon_1"/>
    <property type="match status" value="1"/>
</dbReference>
<dbReference type="Pfam" id="PF13603">
    <property type="entry name" value="tRNA-synt_1_2"/>
    <property type="match status" value="1"/>
</dbReference>
<dbReference type="Pfam" id="PF09334">
    <property type="entry name" value="tRNA-synt_1g"/>
    <property type="match status" value="1"/>
</dbReference>
<dbReference type="PRINTS" id="PR00985">
    <property type="entry name" value="TRNASYNTHLEU"/>
</dbReference>
<dbReference type="SUPFAM" id="SSF47323">
    <property type="entry name" value="Anticodon-binding domain of a subclass of class I aminoacyl-tRNA synthetases"/>
    <property type="match status" value="1"/>
</dbReference>
<dbReference type="SUPFAM" id="SSF52374">
    <property type="entry name" value="Nucleotidylyl transferase"/>
    <property type="match status" value="1"/>
</dbReference>
<dbReference type="SUPFAM" id="SSF50677">
    <property type="entry name" value="ValRS/IleRS/LeuRS editing domain"/>
    <property type="match status" value="1"/>
</dbReference>
<dbReference type="PROSITE" id="PS00178">
    <property type="entry name" value="AA_TRNA_LIGASE_I"/>
    <property type="match status" value="1"/>
</dbReference>
<accession>B2S3H7</accession>
<organism>
    <name type="scientific">Treponema pallidum subsp. pallidum (strain SS14)</name>
    <dbReference type="NCBI Taxonomy" id="455434"/>
    <lineage>
        <taxon>Bacteria</taxon>
        <taxon>Pseudomonadati</taxon>
        <taxon>Spirochaetota</taxon>
        <taxon>Spirochaetia</taxon>
        <taxon>Spirochaetales</taxon>
        <taxon>Treponemataceae</taxon>
        <taxon>Treponema</taxon>
    </lineage>
</organism>
<sequence length="878" mass="98991">MGYPFRALEKKWQAYWRDKRVFCVSEDERFPPERRAYVLDMFPYPSAQGLHVGHPEGYTATDIYCRYLRMGGYNVLHPMGFDAFGLPAENFALKTGTHPRVSTSANCDTFRRQIQSFGFSYDWEREISTADPEYYRWTQWLFLKLYEKGLAYEATAPINWCPSCKTGLANEEVRDACCERCGAEVTRRGVRQWMVRITAYAERLLSDLDELDWPESVKQMQRNWIGKSCGAEIDFPVDAPACSVHDKLPQTIRVYTTRADTLFGVTYLVLAPEHEAVTALTTHAQRAAVQAYVQRAAKKNDLERTDLAKEKTGVFTGAYVRNPINDMRIPVWVGDYVLVSYGTGAVMAVPAHDQRDWDFATRFGLPKLTVVSADYTATVPNSNSPQGAVLQRCVSDEGFVVNSGAFNGLASADARERIVAHLEMRGAGARRVTYRLRDWVFSRQRYWGEPIPLVHCPSCGVVPLPESALPLLLPETADFTPTEDGQGPLARARTWLRVPCPQCASDAVRETNTMPQWAGSCWYYLRYMDPRNKTAFCAPEKERYWAPVALYVGGAEHAVLHLLYARFWHKVLYDLGLVSTKEPFARLVNQGMITSYAYRRKNGALVPHDEVHTNAQGTYVHARTGEKLECVVAKMSKALKNVVNPDDMIAAYGADACRVYEMFMGPLEASKPWNTQGLVGVFRFLEKIWVLAGRVAAANGIPQDSRAEPPGDLHAQKKSCSMYALETLLHRTIQKVTDDTSALSFNTAISQMMIFVNEATRVARRMPLPSKMWEMFVKILSPYAPHLAEELWEMCGHTHTIAYEPWPQVDPARVAPHVCSVVVQVNGKVRDTFSVAPNAPNEELEQKARETAGARKFLGTQQPKRVVIVPNKLVNFVL</sequence>
<name>SYL_TREPS</name>